<organism>
    <name type="scientific">Erythrobacter litoralis (strain HTCC2594)</name>
    <dbReference type="NCBI Taxonomy" id="314225"/>
    <lineage>
        <taxon>Bacteria</taxon>
        <taxon>Pseudomonadati</taxon>
        <taxon>Pseudomonadota</taxon>
        <taxon>Alphaproteobacteria</taxon>
        <taxon>Sphingomonadales</taxon>
        <taxon>Erythrobacteraceae</taxon>
        <taxon>Erythrobacter/Porphyrobacter group</taxon>
        <taxon>Erythrobacter</taxon>
    </lineage>
</organism>
<sequence length="189" mass="20994">MQIWAGLGNPGPKYALHRHNVGFMACDVIAEMHGFEPVQKKFQGWVQEGRIGSEKVLLLKPGTFMNESGRAIGEAMRFYKLEPQDVTVFYDELDLEPFKIKVKRGGGAAGHNGIRSTIRHIGEDFRRIRIGIGHPGHKDRVTGHVLGNYAKAEQDDLVQMLGAIGAEAEWLAKGDDARFMSDIALRLQA</sequence>
<name>PTH_ERYLH</name>
<dbReference type="EC" id="3.1.1.29" evidence="1"/>
<dbReference type="EMBL" id="CP000157">
    <property type="protein sequence ID" value="ABC63259.1"/>
    <property type="molecule type" value="Genomic_DNA"/>
</dbReference>
<dbReference type="RefSeq" id="WP_011414095.1">
    <property type="nucleotide sequence ID" value="NC_007722.1"/>
</dbReference>
<dbReference type="SMR" id="Q2NAN2"/>
<dbReference type="STRING" id="314225.ELI_05835"/>
<dbReference type="KEGG" id="eli:ELI_05835"/>
<dbReference type="eggNOG" id="COG0193">
    <property type="taxonomic scope" value="Bacteria"/>
</dbReference>
<dbReference type="HOGENOM" id="CLU_062456_1_0_5"/>
<dbReference type="OrthoDB" id="9800507at2"/>
<dbReference type="Proteomes" id="UP000008808">
    <property type="component" value="Chromosome"/>
</dbReference>
<dbReference type="GO" id="GO:0005737">
    <property type="term" value="C:cytoplasm"/>
    <property type="evidence" value="ECO:0007669"/>
    <property type="project" value="UniProtKB-SubCell"/>
</dbReference>
<dbReference type="GO" id="GO:0004045">
    <property type="term" value="F:peptidyl-tRNA hydrolase activity"/>
    <property type="evidence" value="ECO:0007669"/>
    <property type="project" value="UniProtKB-UniRule"/>
</dbReference>
<dbReference type="GO" id="GO:0000049">
    <property type="term" value="F:tRNA binding"/>
    <property type="evidence" value="ECO:0007669"/>
    <property type="project" value="UniProtKB-UniRule"/>
</dbReference>
<dbReference type="GO" id="GO:0006515">
    <property type="term" value="P:protein quality control for misfolded or incompletely synthesized proteins"/>
    <property type="evidence" value="ECO:0007669"/>
    <property type="project" value="UniProtKB-UniRule"/>
</dbReference>
<dbReference type="GO" id="GO:0072344">
    <property type="term" value="P:rescue of stalled ribosome"/>
    <property type="evidence" value="ECO:0007669"/>
    <property type="project" value="UniProtKB-UniRule"/>
</dbReference>
<dbReference type="CDD" id="cd00462">
    <property type="entry name" value="PTH"/>
    <property type="match status" value="1"/>
</dbReference>
<dbReference type="FunFam" id="3.40.50.1470:FF:000001">
    <property type="entry name" value="Peptidyl-tRNA hydrolase"/>
    <property type="match status" value="1"/>
</dbReference>
<dbReference type="Gene3D" id="3.40.50.1470">
    <property type="entry name" value="Peptidyl-tRNA hydrolase"/>
    <property type="match status" value="1"/>
</dbReference>
<dbReference type="HAMAP" id="MF_00083">
    <property type="entry name" value="Pept_tRNA_hydro_bact"/>
    <property type="match status" value="1"/>
</dbReference>
<dbReference type="InterPro" id="IPR001328">
    <property type="entry name" value="Pept_tRNA_hydro"/>
</dbReference>
<dbReference type="InterPro" id="IPR018171">
    <property type="entry name" value="Pept_tRNA_hydro_CS"/>
</dbReference>
<dbReference type="InterPro" id="IPR036416">
    <property type="entry name" value="Pept_tRNA_hydro_sf"/>
</dbReference>
<dbReference type="NCBIfam" id="TIGR00447">
    <property type="entry name" value="pth"/>
    <property type="match status" value="1"/>
</dbReference>
<dbReference type="PANTHER" id="PTHR17224">
    <property type="entry name" value="PEPTIDYL-TRNA HYDROLASE"/>
    <property type="match status" value="1"/>
</dbReference>
<dbReference type="PANTHER" id="PTHR17224:SF1">
    <property type="entry name" value="PEPTIDYL-TRNA HYDROLASE"/>
    <property type="match status" value="1"/>
</dbReference>
<dbReference type="Pfam" id="PF01195">
    <property type="entry name" value="Pept_tRNA_hydro"/>
    <property type="match status" value="1"/>
</dbReference>
<dbReference type="SUPFAM" id="SSF53178">
    <property type="entry name" value="Peptidyl-tRNA hydrolase-like"/>
    <property type="match status" value="1"/>
</dbReference>
<dbReference type="PROSITE" id="PS01196">
    <property type="entry name" value="PEPT_TRNA_HYDROL_2"/>
    <property type="match status" value="1"/>
</dbReference>
<accession>Q2NAN2</accession>
<keyword id="KW-0963">Cytoplasm</keyword>
<keyword id="KW-0378">Hydrolase</keyword>
<keyword id="KW-1185">Reference proteome</keyword>
<keyword id="KW-0694">RNA-binding</keyword>
<keyword id="KW-0820">tRNA-binding</keyword>
<gene>
    <name evidence="1" type="primary">pth</name>
    <name type="ordered locus">ELI_05835</name>
</gene>
<protein>
    <recommendedName>
        <fullName evidence="1">Peptidyl-tRNA hydrolase</fullName>
        <shortName evidence="1">Pth</shortName>
        <ecNumber evidence="1">3.1.1.29</ecNumber>
    </recommendedName>
</protein>
<feature type="chain" id="PRO_1000010589" description="Peptidyl-tRNA hydrolase">
    <location>
        <begin position="1"/>
        <end position="189"/>
    </location>
</feature>
<feature type="active site" description="Proton acceptor" evidence="1">
    <location>
        <position position="19"/>
    </location>
</feature>
<feature type="binding site" evidence="1">
    <location>
        <position position="14"/>
    </location>
    <ligand>
        <name>tRNA</name>
        <dbReference type="ChEBI" id="CHEBI:17843"/>
    </ligand>
</feature>
<feature type="binding site" evidence="1">
    <location>
        <position position="64"/>
    </location>
    <ligand>
        <name>tRNA</name>
        <dbReference type="ChEBI" id="CHEBI:17843"/>
    </ligand>
</feature>
<feature type="binding site" evidence="1">
    <location>
        <position position="66"/>
    </location>
    <ligand>
        <name>tRNA</name>
        <dbReference type="ChEBI" id="CHEBI:17843"/>
    </ligand>
</feature>
<feature type="binding site" evidence="1">
    <location>
        <position position="112"/>
    </location>
    <ligand>
        <name>tRNA</name>
        <dbReference type="ChEBI" id="CHEBI:17843"/>
    </ligand>
</feature>
<feature type="site" description="Discriminates between blocked and unblocked aminoacyl-tRNA" evidence="1">
    <location>
        <position position="9"/>
    </location>
</feature>
<feature type="site" description="Stabilizes the basic form of H active site to accept a proton" evidence="1">
    <location>
        <position position="91"/>
    </location>
</feature>
<proteinExistence type="inferred from homology"/>
<evidence type="ECO:0000255" key="1">
    <source>
        <dbReference type="HAMAP-Rule" id="MF_00083"/>
    </source>
</evidence>
<comment type="function">
    <text evidence="1">Hydrolyzes ribosome-free peptidyl-tRNAs (with 1 or more amino acids incorporated), which drop off the ribosome during protein synthesis, or as a result of ribosome stalling.</text>
</comment>
<comment type="function">
    <text evidence="1">Catalyzes the release of premature peptidyl moieties from peptidyl-tRNA molecules trapped in stalled 50S ribosomal subunits, and thus maintains levels of free tRNAs and 50S ribosomes.</text>
</comment>
<comment type="catalytic activity">
    <reaction evidence="1">
        <text>an N-acyl-L-alpha-aminoacyl-tRNA + H2O = an N-acyl-L-amino acid + a tRNA + H(+)</text>
        <dbReference type="Rhea" id="RHEA:54448"/>
        <dbReference type="Rhea" id="RHEA-COMP:10123"/>
        <dbReference type="Rhea" id="RHEA-COMP:13883"/>
        <dbReference type="ChEBI" id="CHEBI:15377"/>
        <dbReference type="ChEBI" id="CHEBI:15378"/>
        <dbReference type="ChEBI" id="CHEBI:59874"/>
        <dbReference type="ChEBI" id="CHEBI:78442"/>
        <dbReference type="ChEBI" id="CHEBI:138191"/>
        <dbReference type="EC" id="3.1.1.29"/>
    </reaction>
</comment>
<comment type="subunit">
    <text evidence="1">Monomer.</text>
</comment>
<comment type="subcellular location">
    <subcellularLocation>
        <location evidence="1">Cytoplasm</location>
    </subcellularLocation>
</comment>
<comment type="similarity">
    <text evidence="1">Belongs to the PTH family.</text>
</comment>
<reference key="1">
    <citation type="journal article" date="2009" name="J. Bacteriol.">
        <title>Complete genome sequence of Erythrobacter litoralis HTCC2594.</title>
        <authorList>
            <person name="Oh H.M."/>
            <person name="Giovannoni S.J."/>
            <person name="Ferriera S."/>
            <person name="Johnson J."/>
            <person name="Cho J.C."/>
        </authorList>
    </citation>
    <scope>NUCLEOTIDE SEQUENCE [LARGE SCALE GENOMIC DNA]</scope>
    <source>
        <strain>HTCC2594</strain>
    </source>
</reference>